<dbReference type="EMBL" id="U00089">
    <property type="protein sequence ID" value="AAB95860.1"/>
    <property type="molecule type" value="Genomic_DNA"/>
</dbReference>
<dbReference type="PIR" id="S73538">
    <property type="entry name" value="S73538"/>
</dbReference>
<dbReference type="RefSeq" id="NP_110319.1">
    <property type="nucleotide sequence ID" value="NC_000912.1"/>
</dbReference>
<dbReference type="RefSeq" id="WP_010874987.1">
    <property type="nucleotide sequence ID" value="NZ_OU342337.1"/>
</dbReference>
<dbReference type="SMR" id="P75166"/>
<dbReference type="STRING" id="272634.MPN_630"/>
<dbReference type="EnsemblBacteria" id="AAB95860">
    <property type="protein sequence ID" value="AAB95860"/>
    <property type="gene ID" value="MPN_630"/>
</dbReference>
<dbReference type="KEGG" id="mpn:MPN_630"/>
<dbReference type="PATRIC" id="fig|272634.6.peg.694"/>
<dbReference type="HOGENOM" id="CLU_043038_0_0_14"/>
<dbReference type="OrthoDB" id="387512at2"/>
<dbReference type="BioCyc" id="MPNE272634:G1GJ3-1011-MONOMER"/>
<dbReference type="Proteomes" id="UP000000808">
    <property type="component" value="Chromosome"/>
</dbReference>
<dbReference type="GO" id="GO:0005886">
    <property type="term" value="C:plasma membrane"/>
    <property type="evidence" value="ECO:0007669"/>
    <property type="project" value="UniProtKB-SubCell"/>
</dbReference>
<dbReference type="Gene3D" id="3.30.70.120">
    <property type="match status" value="1"/>
</dbReference>
<dbReference type="InterPro" id="IPR019264">
    <property type="entry name" value="DUF2179"/>
</dbReference>
<dbReference type="InterPro" id="IPR015867">
    <property type="entry name" value="N-reg_PII/ATP_PRibTrfase_C"/>
</dbReference>
<dbReference type="InterPro" id="IPR051461">
    <property type="entry name" value="UPF0750_membrane"/>
</dbReference>
<dbReference type="InterPro" id="IPR003740">
    <property type="entry name" value="YitT"/>
</dbReference>
<dbReference type="PANTHER" id="PTHR33545:SF5">
    <property type="entry name" value="UPF0750 MEMBRANE PROTEIN YITT"/>
    <property type="match status" value="1"/>
</dbReference>
<dbReference type="PANTHER" id="PTHR33545">
    <property type="entry name" value="UPF0750 MEMBRANE PROTEIN YITT-RELATED"/>
    <property type="match status" value="1"/>
</dbReference>
<dbReference type="Pfam" id="PF10035">
    <property type="entry name" value="DUF2179"/>
    <property type="match status" value="1"/>
</dbReference>
<dbReference type="Pfam" id="PF02588">
    <property type="entry name" value="YitT_membrane"/>
    <property type="match status" value="1"/>
</dbReference>
<evidence type="ECO:0000255" key="1"/>
<evidence type="ECO:0000305" key="2"/>
<protein>
    <recommendedName>
        <fullName>Uncharacterized protein MG432 homolog</fullName>
    </recommendedName>
</protein>
<proteinExistence type="predicted"/>
<feature type="chain" id="PRO_0000210611" description="Uncharacterized protein MG432 homolog">
    <location>
        <begin position="1"/>
        <end position="404"/>
    </location>
</feature>
<feature type="transmembrane region" description="Helical" evidence="1">
    <location>
        <begin position="37"/>
        <end position="57"/>
    </location>
</feature>
<feature type="transmembrane region" description="Helical" evidence="1">
    <location>
        <begin position="92"/>
        <end position="112"/>
    </location>
</feature>
<feature type="transmembrane region" description="Helical" evidence="1">
    <location>
        <begin position="122"/>
        <end position="142"/>
    </location>
</feature>
<feature type="transmembrane region" description="Helical" evidence="1">
    <location>
        <begin position="188"/>
        <end position="208"/>
    </location>
</feature>
<feature type="transmembrane region" description="Helical" evidence="1">
    <location>
        <begin position="230"/>
        <end position="250"/>
    </location>
</feature>
<feature type="transmembrane region" description="Helical" evidence="1">
    <location>
        <begin position="272"/>
        <end position="292"/>
    </location>
</feature>
<sequence>MQDKNVKIQGNLVRVHLSGSFLKFQAIYKVKKLYLQLLILSVIAFFWGLLGVVFVQFSGLYDIGIASISQGLARLADYLIRSNKVSVDADTIYNVIFWLSQILINIPLFVLGWYKISKKFTLLTLYFVVVSNVFGFAFSYIPGVENFFLFANLTELTKANGGLEQAINNQGVQLIFWEQTAEKQISLMFYALIWGFLQAVFYSVILIIDASSGGLDFLAFWYSEKKHKDIGGILFIVNTLSFLIGYTIGTYLTGSLLAQGFQEDRQKPFGVAFFLSPNLVFTIFMNIILGIFTSYFFPKYQFVKVEVYGKHMEQMRNYLLSSNQSFAVTMFEVEGGYSRQKNQVLVTNCLFTKTAELLEAVRRVDPDALFSITFIKKLDGYIYERKAPDKVVPPVKDPVKAQEN</sequence>
<reference key="1">
    <citation type="journal article" date="1996" name="Nucleic Acids Res.">
        <title>Complete sequence analysis of the genome of the bacterium Mycoplasma pneumoniae.</title>
        <authorList>
            <person name="Himmelreich R."/>
            <person name="Hilbert H."/>
            <person name="Plagens H."/>
            <person name="Pirkl E."/>
            <person name="Li B.-C."/>
            <person name="Herrmann R."/>
        </authorList>
    </citation>
    <scope>NUCLEOTIDE SEQUENCE [LARGE SCALE GENOMIC DNA]</scope>
    <source>
        <strain>ATCC 29342 / M129 / Subtype 1</strain>
    </source>
</reference>
<organism>
    <name type="scientific">Mycoplasma pneumoniae (strain ATCC 29342 / M129 / Subtype 1)</name>
    <name type="common">Mycoplasmoides pneumoniae</name>
    <dbReference type="NCBI Taxonomy" id="272634"/>
    <lineage>
        <taxon>Bacteria</taxon>
        <taxon>Bacillati</taxon>
        <taxon>Mycoplasmatota</taxon>
        <taxon>Mycoplasmoidales</taxon>
        <taxon>Mycoplasmoidaceae</taxon>
        <taxon>Mycoplasmoides</taxon>
    </lineage>
</organism>
<keyword id="KW-1003">Cell membrane</keyword>
<keyword id="KW-0472">Membrane</keyword>
<keyword id="KW-1185">Reference proteome</keyword>
<keyword id="KW-0812">Transmembrane</keyword>
<keyword id="KW-1133">Transmembrane helix</keyword>
<gene>
    <name type="ordered locus">MPN_630</name>
    <name type="ORF">C12_orf404</name>
    <name type="ORF">MP212</name>
</gene>
<comment type="subcellular location">
    <subcellularLocation>
        <location evidence="2">Cell membrane</location>
        <topology evidence="2">Multi-pass membrane protein</topology>
    </subcellularLocation>
</comment>
<name>Y630_MYCPN</name>
<accession>P75166</accession>